<proteinExistence type="inferred from homology"/>
<protein>
    <recommendedName>
        <fullName evidence="1">Lysine--tRNA ligase</fullName>
        <ecNumber evidence="1">6.1.1.6</ecNumber>
    </recommendedName>
    <alternativeName>
        <fullName evidence="1">Lysyl-tRNA synthetase</fullName>
        <shortName evidence="1">LysRS</shortName>
    </alternativeName>
</protein>
<keyword id="KW-0030">Aminoacyl-tRNA synthetase</keyword>
<keyword id="KW-0067">ATP-binding</keyword>
<keyword id="KW-0963">Cytoplasm</keyword>
<keyword id="KW-0436">Ligase</keyword>
<keyword id="KW-0460">Magnesium</keyword>
<keyword id="KW-0479">Metal-binding</keyword>
<keyword id="KW-0547">Nucleotide-binding</keyword>
<keyword id="KW-0648">Protein biosynthesis</keyword>
<keyword id="KW-1185">Reference proteome</keyword>
<evidence type="ECO:0000255" key="1">
    <source>
        <dbReference type="HAMAP-Rule" id="MF_00252"/>
    </source>
</evidence>
<name>SYK_FUSNN</name>
<feature type="chain" id="PRO_0000152631" description="Lysine--tRNA ligase">
    <location>
        <begin position="1"/>
        <end position="493"/>
    </location>
</feature>
<feature type="binding site" evidence="1">
    <location>
        <position position="402"/>
    </location>
    <ligand>
        <name>Mg(2+)</name>
        <dbReference type="ChEBI" id="CHEBI:18420"/>
        <label>1</label>
    </ligand>
</feature>
<feature type="binding site" evidence="1">
    <location>
        <position position="409"/>
    </location>
    <ligand>
        <name>Mg(2+)</name>
        <dbReference type="ChEBI" id="CHEBI:18420"/>
        <label>1</label>
    </ligand>
</feature>
<feature type="binding site" evidence="1">
    <location>
        <position position="409"/>
    </location>
    <ligand>
        <name>Mg(2+)</name>
        <dbReference type="ChEBI" id="CHEBI:18420"/>
        <label>2</label>
    </ligand>
</feature>
<organism>
    <name type="scientific">Fusobacterium nucleatum subsp. nucleatum (strain ATCC 25586 / DSM 15643 / BCRC 10681 / CIP 101130 / JCM 8532 / KCTC 2640 / LMG 13131 / VPI 4355)</name>
    <dbReference type="NCBI Taxonomy" id="190304"/>
    <lineage>
        <taxon>Bacteria</taxon>
        <taxon>Fusobacteriati</taxon>
        <taxon>Fusobacteriota</taxon>
        <taxon>Fusobacteriia</taxon>
        <taxon>Fusobacteriales</taxon>
        <taxon>Fusobacteriaceae</taxon>
        <taxon>Fusobacterium</taxon>
    </lineage>
</organism>
<reference key="1">
    <citation type="journal article" date="2002" name="J. Bacteriol.">
        <title>Genome sequence and analysis of the oral bacterium Fusobacterium nucleatum strain ATCC 25586.</title>
        <authorList>
            <person name="Kapatral V."/>
            <person name="Anderson I."/>
            <person name="Ivanova N."/>
            <person name="Reznik G."/>
            <person name="Los T."/>
            <person name="Lykidis A."/>
            <person name="Bhattacharyya A."/>
            <person name="Bartman A."/>
            <person name="Gardner W."/>
            <person name="Grechkin G."/>
            <person name="Zhu L."/>
            <person name="Vasieva O."/>
            <person name="Chu L."/>
            <person name="Kogan Y."/>
            <person name="Chaga O."/>
            <person name="Goltsman E."/>
            <person name="Bernal A."/>
            <person name="Larsen N."/>
            <person name="D'Souza M."/>
            <person name="Walunas T."/>
            <person name="Pusch G."/>
            <person name="Haselkorn R."/>
            <person name="Fonstein M."/>
            <person name="Kyrpides N.C."/>
            <person name="Overbeek R."/>
        </authorList>
    </citation>
    <scope>NUCLEOTIDE SEQUENCE [LARGE SCALE GENOMIC DNA]</scope>
    <source>
        <strain>ATCC 25586 / DSM 15643 / BCRC 10681 / CIP 101130 / JCM 8532 / KCTC 2640 / LMG 13131 / VPI 4355</strain>
    </source>
</reference>
<accession>Q8RG52</accession>
<sequence>MEKYFDRLEKEPLIAERWKKIEELESYGIKPFGKKYDKQIMIGDILKHKPEENLKFKTAGRIMSLRGKGKVYFAHIEDQSGKIQIYIKKDELGEEQFDHIVKMLNVGDIIGLEGELFITHTEELTLRVKSIALLTKNVRSLPEKYHGLTDVEIRYRKRYVDLIMNPEVRETFIKRTKIIKAIRKYLDDRGFLEVETPIMHPILGGAAAKPFITHHNTLNIDLFLRIAPELYLKKLIVGGFERVYDLNRNFRNEGISTRHNPEFTMVELYQAHADFNDMMDLCEGIISSVCQEINGTTDIEYDGVQLSLKNFNRVHMVDMIKEVTGVDFWKEMTFEEAKKLAKEHHVEVADHMNSVGHIINEFFEQKCEEKVIQPTFVYGHPVEISPLAKRNEDNPNFTDRFELFINKREYANAFTELNDPADQRGRFEAQVEEAMRGNEEATPEIDESFVEALEYGLPPTGGMGIGIDRLVMLLTGAPSIRDVILFPQMKPRD</sequence>
<dbReference type="EC" id="6.1.1.6" evidence="1"/>
<dbReference type="EMBL" id="AE009951">
    <property type="protein sequence ID" value="AAL94662.1"/>
    <property type="molecule type" value="Genomic_DNA"/>
</dbReference>
<dbReference type="RefSeq" id="NP_603363.1">
    <property type="nucleotide sequence ID" value="NC_003454.1"/>
</dbReference>
<dbReference type="RefSeq" id="WP_011016412.1">
    <property type="nucleotide sequence ID" value="NZ_CP028101.1"/>
</dbReference>
<dbReference type="SMR" id="Q8RG52"/>
<dbReference type="FunCoup" id="Q8RG52">
    <property type="interactions" value="426"/>
</dbReference>
<dbReference type="STRING" id="190304.FN0466"/>
<dbReference type="PaxDb" id="190304-FN0466"/>
<dbReference type="EnsemblBacteria" id="AAL94662">
    <property type="protein sequence ID" value="AAL94662"/>
    <property type="gene ID" value="FN0466"/>
</dbReference>
<dbReference type="GeneID" id="79783474"/>
<dbReference type="KEGG" id="fnu:FN0466"/>
<dbReference type="PATRIC" id="fig|190304.8.peg.1036"/>
<dbReference type="eggNOG" id="COG1190">
    <property type="taxonomic scope" value="Bacteria"/>
</dbReference>
<dbReference type="HOGENOM" id="CLU_008255_6_0_0"/>
<dbReference type="InParanoid" id="Q8RG52"/>
<dbReference type="BioCyc" id="FNUC190304:G1FZS-1059-MONOMER"/>
<dbReference type="Proteomes" id="UP000002521">
    <property type="component" value="Chromosome"/>
</dbReference>
<dbReference type="GO" id="GO:0005737">
    <property type="term" value="C:cytoplasm"/>
    <property type="evidence" value="ECO:0000318"/>
    <property type="project" value="GO_Central"/>
</dbReference>
<dbReference type="GO" id="GO:0005829">
    <property type="term" value="C:cytosol"/>
    <property type="evidence" value="ECO:0000318"/>
    <property type="project" value="GO_Central"/>
</dbReference>
<dbReference type="GO" id="GO:0005524">
    <property type="term" value="F:ATP binding"/>
    <property type="evidence" value="ECO:0007669"/>
    <property type="project" value="UniProtKB-UniRule"/>
</dbReference>
<dbReference type="GO" id="GO:0004824">
    <property type="term" value="F:lysine-tRNA ligase activity"/>
    <property type="evidence" value="ECO:0000318"/>
    <property type="project" value="GO_Central"/>
</dbReference>
<dbReference type="GO" id="GO:0000287">
    <property type="term" value="F:magnesium ion binding"/>
    <property type="evidence" value="ECO:0007669"/>
    <property type="project" value="UniProtKB-UniRule"/>
</dbReference>
<dbReference type="GO" id="GO:0000049">
    <property type="term" value="F:tRNA binding"/>
    <property type="evidence" value="ECO:0000318"/>
    <property type="project" value="GO_Central"/>
</dbReference>
<dbReference type="GO" id="GO:0006430">
    <property type="term" value="P:lysyl-tRNA aminoacylation"/>
    <property type="evidence" value="ECO:0000318"/>
    <property type="project" value="GO_Central"/>
</dbReference>
<dbReference type="CDD" id="cd00775">
    <property type="entry name" value="LysRS_core"/>
    <property type="match status" value="1"/>
</dbReference>
<dbReference type="CDD" id="cd04322">
    <property type="entry name" value="LysRS_N"/>
    <property type="match status" value="1"/>
</dbReference>
<dbReference type="FunFam" id="2.40.50.140:FF:000409">
    <property type="entry name" value="Lysine--tRNA ligase"/>
    <property type="match status" value="1"/>
</dbReference>
<dbReference type="FunFam" id="3.30.930.10:FF:000001">
    <property type="entry name" value="Lysine--tRNA ligase"/>
    <property type="match status" value="1"/>
</dbReference>
<dbReference type="Gene3D" id="3.30.930.10">
    <property type="entry name" value="Bira Bifunctional Protein, Domain 2"/>
    <property type="match status" value="1"/>
</dbReference>
<dbReference type="Gene3D" id="2.40.50.140">
    <property type="entry name" value="Nucleic acid-binding proteins"/>
    <property type="match status" value="1"/>
</dbReference>
<dbReference type="HAMAP" id="MF_00252">
    <property type="entry name" value="Lys_tRNA_synth_class2"/>
    <property type="match status" value="1"/>
</dbReference>
<dbReference type="InterPro" id="IPR004364">
    <property type="entry name" value="Aa-tRNA-synt_II"/>
</dbReference>
<dbReference type="InterPro" id="IPR006195">
    <property type="entry name" value="aa-tRNA-synth_II"/>
</dbReference>
<dbReference type="InterPro" id="IPR045864">
    <property type="entry name" value="aa-tRNA-synth_II/BPL/LPL"/>
</dbReference>
<dbReference type="InterPro" id="IPR002313">
    <property type="entry name" value="Lys-tRNA-ligase_II"/>
</dbReference>
<dbReference type="InterPro" id="IPR044136">
    <property type="entry name" value="Lys-tRNA-ligase_II_N"/>
</dbReference>
<dbReference type="InterPro" id="IPR018149">
    <property type="entry name" value="Lys-tRNA-synth_II_C"/>
</dbReference>
<dbReference type="InterPro" id="IPR012340">
    <property type="entry name" value="NA-bd_OB-fold"/>
</dbReference>
<dbReference type="InterPro" id="IPR004365">
    <property type="entry name" value="NA-bd_OB_tRNA"/>
</dbReference>
<dbReference type="NCBIfam" id="TIGR00499">
    <property type="entry name" value="lysS_bact"/>
    <property type="match status" value="1"/>
</dbReference>
<dbReference type="NCBIfam" id="NF001756">
    <property type="entry name" value="PRK00484.1"/>
    <property type="match status" value="1"/>
</dbReference>
<dbReference type="PANTHER" id="PTHR42918:SF15">
    <property type="entry name" value="LYSINE--TRNA LIGASE, CHLOROPLASTIC_MITOCHONDRIAL"/>
    <property type="match status" value="1"/>
</dbReference>
<dbReference type="PANTHER" id="PTHR42918">
    <property type="entry name" value="LYSYL-TRNA SYNTHETASE"/>
    <property type="match status" value="1"/>
</dbReference>
<dbReference type="Pfam" id="PF00152">
    <property type="entry name" value="tRNA-synt_2"/>
    <property type="match status" value="1"/>
</dbReference>
<dbReference type="Pfam" id="PF01336">
    <property type="entry name" value="tRNA_anti-codon"/>
    <property type="match status" value="1"/>
</dbReference>
<dbReference type="PRINTS" id="PR00982">
    <property type="entry name" value="TRNASYNTHLYS"/>
</dbReference>
<dbReference type="SUPFAM" id="SSF55681">
    <property type="entry name" value="Class II aaRS and biotin synthetases"/>
    <property type="match status" value="1"/>
</dbReference>
<dbReference type="SUPFAM" id="SSF50249">
    <property type="entry name" value="Nucleic acid-binding proteins"/>
    <property type="match status" value="1"/>
</dbReference>
<dbReference type="PROSITE" id="PS50862">
    <property type="entry name" value="AA_TRNA_LIGASE_II"/>
    <property type="match status" value="1"/>
</dbReference>
<comment type="catalytic activity">
    <reaction evidence="1">
        <text>tRNA(Lys) + L-lysine + ATP = L-lysyl-tRNA(Lys) + AMP + diphosphate</text>
        <dbReference type="Rhea" id="RHEA:20792"/>
        <dbReference type="Rhea" id="RHEA-COMP:9696"/>
        <dbReference type="Rhea" id="RHEA-COMP:9697"/>
        <dbReference type="ChEBI" id="CHEBI:30616"/>
        <dbReference type="ChEBI" id="CHEBI:32551"/>
        <dbReference type="ChEBI" id="CHEBI:33019"/>
        <dbReference type="ChEBI" id="CHEBI:78442"/>
        <dbReference type="ChEBI" id="CHEBI:78529"/>
        <dbReference type="ChEBI" id="CHEBI:456215"/>
        <dbReference type="EC" id="6.1.1.6"/>
    </reaction>
</comment>
<comment type="cofactor">
    <cofactor evidence="1">
        <name>Mg(2+)</name>
        <dbReference type="ChEBI" id="CHEBI:18420"/>
    </cofactor>
    <text evidence="1">Binds 3 Mg(2+) ions per subunit.</text>
</comment>
<comment type="subunit">
    <text evidence="1">Homodimer.</text>
</comment>
<comment type="subcellular location">
    <subcellularLocation>
        <location evidence="1">Cytoplasm</location>
    </subcellularLocation>
</comment>
<comment type="similarity">
    <text evidence="1">Belongs to the class-II aminoacyl-tRNA synthetase family.</text>
</comment>
<gene>
    <name evidence="1" type="primary">lysS</name>
    <name type="ordered locus">FN0466</name>
</gene>